<evidence type="ECO:0000255" key="1">
    <source>
        <dbReference type="HAMAP-Rule" id="MF_00300"/>
    </source>
</evidence>
<evidence type="ECO:0000256" key="2">
    <source>
        <dbReference type="SAM" id="MobiDB-lite"/>
    </source>
</evidence>
<reference key="1">
    <citation type="journal article" date="2002" name="J. Mol. Microbiol. Biotechnol.">
        <title>The genome of Methanosarcina mazei: evidence for lateral gene transfer between Bacteria and Archaea.</title>
        <authorList>
            <person name="Deppenmeier U."/>
            <person name="Johann A."/>
            <person name="Hartsch T."/>
            <person name="Merkl R."/>
            <person name="Schmitz R.A."/>
            <person name="Martinez-Arias R."/>
            <person name="Henne A."/>
            <person name="Wiezer A."/>
            <person name="Baeumer S."/>
            <person name="Jacobi C."/>
            <person name="Brueggemann H."/>
            <person name="Lienard T."/>
            <person name="Christmann A."/>
            <person name="Boemecke M."/>
            <person name="Steckel S."/>
            <person name="Bhattacharyya A."/>
            <person name="Lykidis A."/>
            <person name="Overbeek R."/>
            <person name="Klenk H.-P."/>
            <person name="Gunsalus R.P."/>
            <person name="Fritz H.-J."/>
            <person name="Gottschalk G."/>
        </authorList>
    </citation>
    <scope>NUCLEOTIDE SEQUENCE [LARGE SCALE GENOMIC DNA]</scope>
    <source>
        <strain>ATCC BAA-159 / DSM 3647 / Goe1 / Go1 / JCM 11833 / OCM 88</strain>
    </source>
</reference>
<dbReference type="EC" id="4.2.3.5" evidence="1"/>
<dbReference type="EMBL" id="AE008384">
    <property type="protein sequence ID" value="AAM31408.1"/>
    <property type="molecule type" value="Genomic_DNA"/>
</dbReference>
<dbReference type="RefSeq" id="WP_011033654.1">
    <property type="nucleotide sequence ID" value="NC_003901.1"/>
</dbReference>
<dbReference type="SMR" id="Q8PW84"/>
<dbReference type="GeneID" id="82160772"/>
<dbReference type="KEGG" id="mma:MM_1712"/>
<dbReference type="PATRIC" id="fig|192952.21.peg.1987"/>
<dbReference type="eggNOG" id="arCOG04133">
    <property type="taxonomic scope" value="Archaea"/>
</dbReference>
<dbReference type="HOGENOM" id="CLU_034547_0_2_2"/>
<dbReference type="UniPathway" id="UPA00053">
    <property type="reaction ID" value="UER00090"/>
</dbReference>
<dbReference type="Proteomes" id="UP000000595">
    <property type="component" value="Chromosome"/>
</dbReference>
<dbReference type="GO" id="GO:0005829">
    <property type="term" value="C:cytosol"/>
    <property type="evidence" value="ECO:0007669"/>
    <property type="project" value="TreeGrafter"/>
</dbReference>
<dbReference type="GO" id="GO:0004107">
    <property type="term" value="F:chorismate synthase activity"/>
    <property type="evidence" value="ECO:0007669"/>
    <property type="project" value="UniProtKB-UniRule"/>
</dbReference>
<dbReference type="GO" id="GO:0010181">
    <property type="term" value="F:FMN binding"/>
    <property type="evidence" value="ECO:0007669"/>
    <property type="project" value="TreeGrafter"/>
</dbReference>
<dbReference type="GO" id="GO:0008652">
    <property type="term" value="P:amino acid biosynthetic process"/>
    <property type="evidence" value="ECO:0007669"/>
    <property type="project" value="UniProtKB-KW"/>
</dbReference>
<dbReference type="GO" id="GO:0009073">
    <property type="term" value="P:aromatic amino acid family biosynthetic process"/>
    <property type="evidence" value="ECO:0007669"/>
    <property type="project" value="UniProtKB-KW"/>
</dbReference>
<dbReference type="GO" id="GO:0009423">
    <property type="term" value="P:chorismate biosynthetic process"/>
    <property type="evidence" value="ECO:0007669"/>
    <property type="project" value="UniProtKB-UniRule"/>
</dbReference>
<dbReference type="CDD" id="cd07304">
    <property type="entry name" value="Chorismate_synthase"/>
    <property type="match status" value="1"/>
</dbReference>
<dbReference type="FunFam" id="3.60.150.10:FF:000003">
    <property type="entry name" value="Chorismate synthase"/>
    <property type="match status" value="1"/>
</dbReference>
<dbReference type="Gene3D" id="3.60.150.10">
    <property type="entry name" value="Chorismate synthase AroC"/>
    <property type="match status" value="1"/>
</dbReference>
<dbReference type="HAMAP" id="MF_00300">
    <property type="entry name" value="Chorismate_synth"/>
    <property type="match status" value="1"/>
</dbReference>
<dbReference type="InterPro" id="IPR000453">
    <property type="entry name" value="Chorismate_synth"/>
</dbReference>
<dbReference type="InterPro" id="IPR035904">
    <property type="entry name" value="Chorismate_synth_AroC_sf"/>
</dbReference>
<dbReference type="InterPro" id="IPR020541">
    <property type="entry name" value="Chorismate_synthase_CS"/>
</dbReference>
<dbReference type="NCBIfam" id="TIGR00033">
    <property type="entry name" value="aroC"/>
    <property type="match status" value="1"/>
</dbReference>
<dbReference type="NCBIfam" id="NF003793">
    <property type="entry name" value="PRK05382.1"/>
    <property type="match status" value="1"/>
</dbReference>
<dbReference type="PANTHER" id="PTHR21085">
    <property type="entry name" value="CHORISMATE SYNTHASE"/>
    <property type="match status" value="1"/>
</dbReference>
<dbReference type="PANTHER" id="PTHR21085:SF0">
    <property type="entry name" value="CHORISMATE SYNTHASE"/>
    <property type="match status" value="1"/>
</dbReference>
<dbReference type="Pfam" id="PF01264">
    <property type="entry name" value="Chorismate_synt"/>
    <property type="match status" value="1"/>
</dbReference>
<dbReference type="PIRSF" id="PIRSF001456">
    <property type="entry name" value="Chorismate_synth"/>
    <property type="match status" value="1"/>
</dbReference>
<dbReference type="SUPFAM" id="SSF103263">
    <property type="entry name" value="Chorismate synthase, AroC"/>
    <property type="match status" value="1"/>
</dbReference>
<dbReference type="PROSITE" id="PS00787">
    <property type="entry name" value="CHORISMATE_SYNTHASE_1"/>
    <property type="match status" value="1"/>
</dbReference>
<dbReference type="PROSITE" id="PS00788">
    <property type="entry name" value="CHORISMATE_SYNTHASE_2"/>
    <property type="match status" value="1"/>
</dbReference>
<dbReference type="PROSITE" id="PS00789">
    <property type="entry name" value="CHORISMATE_SYNTHASE_3"/>
    <property type="match status" value="1"/>
</dbReference>
<sequence length="365" mass="38877">MAGNVFGQMFRITTWGESHGRAVGVVVDGLPAGLPFSEADIQKELDRRRPGQSEVSTPRSEADSVEILSGIFEGKSTGTPISMLVWNSDARSSSYDAIKNTPRPGHADFTYIARYGIRDHRGGGRSSARETIGRVAGGALAKLLLSHYGIRIVGHVLELGGIRAKSLSFEEILENVERTPVRCADPEAAKKMLEKVSALRQEGDSAGGIVEVMVKGVPAGLGEPVFDRLDADLAKALMSIPAVKGFEIGAGFEAARMRGSEMNDSFLMEDGKVTCSSNNAGGILGGISSGLDIVCRVAVKPTPSISKLQQTVDLTTRENAEIAIKGRHDPTIPPRMVPVAEAMVALVFADHMLRSGFINPRTLLG</sequence>
<gene>
    <name evidence="1" type="primary">aroC</name>
    <name type="ordered locus">MM_1712</name>
</gene>
<keyword id="KW-0028">Amino-acid biosynthesis</keyword>
<keyword id="KW-0057">Aromatic amino acid biosynthesis</keyword>
<keyword id="KW-0274">FAD</keyword>
<keyword id="KW-0285">Flavoprotein</keyword>
<keyword id="KW-0288">FMN</keyword>
<keyword id="KW-0456">Lyase</keyword>
<keyword id="KW-0521">NADP</keyword>
<feature type="chain" id="PRO_0000140692" description="Chorismate synthase">
    <location>
        <begin position="1"/>
        <end position="365"/>
    </location>
</feature>
<feature type="region of interest" description="Disordered" evidence="2">
    <location>
        <begin position="41"/>
        <end position="62"/>
    </location>
</feature>
<feature type="compositionally biased region" description="Basic and acidic residues" evidence="2">
    <location>
        <begin position="41"/>
        <end position="51"/>
    </location>
</feature>
<feature type="binding site" evidence="1">
    <location>
        <position position="48"/>
    </location>
    <ligand>
        <name>NADP(+)</name>
        <dbReference type="ChEBI" id="CHEBI:58349"/>
    </ligand>
</feature>
<feature type="binding site" evidence="1">
    <location>
        <begin position="125"/>
        <end position="127"/>
    </location>
    <ligand>
        <name>FMN</name>
        <dbReference type="ChEBI" id="CHEBI:58210"/>
    </ligand>
</feature>
<feature type="binding site" evidence="1">
    <location>
        <position position="285"/>
    </location>
    <ligand>
        <name>FMN</name>
        <dbReference type="ChEBI" id="CHEBI:58210"/>
    </ligand>
</feature>
<feature type="binding site" evidence="1">
    <location>
        <begin position="300"/>
        <end position="304"/>
    </location>
    <ligand>
        <name>FMN</name>
        <dbReference type="ChEBI" id="CHEBI:58210"/>
    </ligand>
</feature>
<feature type="binding site" evidence="1">
    <location>
        <position position="327"/>
    </location>
    <ligand>
        <name>FMN</name>
        <dbReference type="ChEBI" id="CHEBI:58210"/>
    </ligand>
</feature>
<protein>
    <recommendedName>
        <fullName evidence="1">Chorismate synthase</fullName>
        <shortName evidence="1">CS</shortName>
        <ecNumber evidence="1">4.2.3.5</ecNumber>
    </recommendedName>
    <alternativeName>
        <fullName evidence="1">5-enolpyruvylshikimate-3-phosphate phospholyase</fullName>
    </alternativeName>
</protein>
<accession>Q8PW84</accession>
<organism>
    <name type="scientific">Methanosarcina mazei (strain ATCC BAA-159 / DSM 3647 / Goe1 / Go1 / JCM 11833 / OCM 88)</name>
    <name type="common">Methanosarcina frisia</name>
    <dbReference type="NCBI Taxonomy" id="192952"/>
    <lineage>
        <taxon>Archaea</taxon>
        <taxon>Methanobacteriati</taxon>
        <taxon>Methanobacteriota</taxon>
        <taxon>Stenosarchaea group</taxon>
        <taxon>Methanomicrobia</taxon>
        <taxon>Methanosarcinales</taxon>
        <taxon>Methanosarcinaceae</taxon>
        <taxon>Methanosarcina</taxon>
    </lineage>
</organism>
<name>AROC_METMA</name>
<proteinExistence type="inferred from homology"/>
<comment type="function">
    <text evidence="1">Catalyzes the anti-1,4-elimination of the C-3 phosphate and the C-6 proR hydrogen from 5-enolpyruvylshikimate-3-phosphate (EPSP) to yield chorismate, which is the branch point compound that serves as the starting substrate for the three terminal pathways of aromatic amino acid biosynthesis. This reaction introduces a second double bond into the aromatic ring system.</text>
</comment>
<comment type="catalytic activity">
    <reaction evidence="1">
        <text>5-O-(1-carboxyvinyl)-3-phosphoshikimate = chorismate + phosphate</text>
        <dbReference type="Rhea" id="RHEA:21020"/>
        <dbReference type="ChEBI" id="CHEBI:29748"/>
        <dbReference type="ChEBI" id="CHEBI:43474"/>
        <dbReference type="ChEBI" id="CHEBI:57701"/>
        <dbReference type="EC" id="4.2.3.5"/>
    </reaction>
</comment>
<comment type="cofactor">
    <cofactor evidence="1">
        <name>FMNH2</name>
        <dbReference type="ChEBI" id="CHEBI:57618"/>
    </cofactor>
    <text evidence="1">Reduced FMN (FMNH(2)).</text>
</comment>
<comment type="pathway">
    <text evidence="1">Metabolic intermediate biosynthesis; chorismate biosynthesis; chorismate from D-erythrose 4-phosphate and phosphoenolpyruvate: step 7/7.</text>
</comment>
<comment type="similarity">
    <text evidence="1">Belongs to the chorismate synthase family.</text>
</comment>